<name>Y607_METJA</name>
<sequence length="79" mass="9398">MHYSIIKPKCKKEIIEIDKGSLKTKRKFAFLLEIGDKILNNKEFYANDDVEVVVDYSFTDSKRPKEKIELYIIEDIKRD</sequence>
<feature type="chain" id="PRO_0000106955" description="Uncharacterized protein MJ0607">
    <location>
        <begin position="1"/>
        <end position="79"/>
    </location>
</feature>
<reference key="1">
    <citation type="journal article" date="1996" name="Science">
        <title>Complete genome sequence of the methanogenic archaeon, Methanococcus jannaschii.</title>
        <authorList>
            <person name="Bult C.J."/>
            <person name="White O."/>
            <person name="Olsen G.J."/>
            <person name="Zhou L."/>
            <person name="Fleischmann R.D."/>
            <person name="Sutton G.G."/>
            <person name="Blake J.A."/>
            <person name="FitzGerald L.M."/>
            <person name="Clayton R.A."/>
            <person name="Gocayne J.D."/>
            <person name="Kerlavage A.R."/>
            <person name="Dougherty B.A."/>
            <person name="Tomb J.-F."/>
            <person name="Adams M.D."/>
            <person name="Reich C.I."/>
            <person name="Overbeek R."/>
            <person name="Kirkness E.F."/>
            <person name="Weinstock K.G."/>
            <person name="Merrick J.M."/>
            <person name="Glodek A."/>
            <person name="Scott J.L."/>
            <person name="Geoghagen N.S.M."/>
            <person name="Weidman J.F."/>
            <person name="Fuhrmann J.L."/>
            <person name="Nguyen D."/>
            <person name="Utterback T.R."/>
            <person name="Kelley J.M."/>
            <person name="Peterson J.D."/>
            <person name="Sadow P.W."/>
            <person name="Hanna M.C."/>
            <person name="Cotton M.D."/>
            <person name="Roberts K.M."/>
            <person name="Hurst M.A."/>
            <person name="Kaine B.P."/>
            <person name="Borodovsky M."/>
            <person name="Klenk H.-P."/>
            <person name="Fraser C.M."/>
            <person name="Smith H.O."/>
            <person name="Woese C.R."/>
            <person name="Venter J.C."/>
        </authorList>
    </citation>
    <scope>NUCLEOTIDE SEQUENCE [LARGE SCALE GENOMIC DNA]</scope>
    <source>
        <strain>ATCC 43067 / DSM 2661 / JAL-1 / JCM 10045 / NBRC 100440</strain>
    </source>
</reference>
<accession>Q58024</accession>
<keyword id="KW-1185">Reference proteome</keyword>
<dbReference type="EMBL" id="L77117">
    <property type="protein sequence ID" value="AAB98607.1"/>
    <property type="molecule type" value="Genomic_DNA"/>
</dbReference>
<dbReference type="PIR" id="G64375">
    <property type="entry name" value="G64375"/>
</dbReference>
<dbReference type="RefSeq" id="WP_010870111.1">
    <property type="nucleotide sequence ID" value="NC_000909.1"/>
</dbReference>
<dbReference type="FunCoup" id="Q58024">
    <property type="interactions" value="2"/>
</dbReference>
<dbReference type="STRING" id="243232.MJ_0607"/>
<dbReference type="PaxDb" id="243232-MJ_0607"/>
<dbReference type="EnsemblBacteria" id="AAB98607">
    <property type="protein sequence ID" value="AAB98607"/>
    <property type="gene ID" value="MJ_0607"/>
</dbReference>
<dbReference type="GeneID" id="1451472"/>
<dbReference type="KEGG" id="mja:MJ_0607"/>
<dbReference type="eggNOG" id="arCOG05043">
    <property type="taxonomic scope" value="Archaea"/>
</dbReference>
<dbReference type="HOGENOM" id="CLU_2581363_0_0_2"/>
<dbReference type="InParanoid" id="Q58024"/>
<dbReference type="OrthoDB" id="59569at2157"/>
<dbReference type="Proteomes" id="UP000000805">
    <property type="component" value="Chromosome"/>
</dbReference>
<protein>
    <recommendedName>
        <fullName>Uncharacterized protein MJ0607</fullName>
    </recommendedName>
</protein>
<proteinExistence type="predicted"/>
<gene>
    <name type="ordered locus">MJ0607</name>
</gene>
<organism>
    <name type="scientific">Methanocaldococcus jannaschii (strain ATCC 43067 / DSM 2661 / JAL-1 / JCM 10045 / NBRC 100440)</name>
    <name type="common">Methanococcus jannaschii</name>
    <dbReference type="NCBI Taxonomy" id="243232"/>
    <lineage>
        <taxon>Archaea</taxon>
        <taxon>Methanobacteriati</taxon>
        <taxon>Methanobacteriota</taxon>
        <taxon>Methanomada group</taxon>
        <taxon>Methanococci</taxon>
        <taxon>Methanococcales</taxon>
        <taxon>Methanocaldococcaceae</taxon>
        <taxon>Methanocaldococcus</taxon>
    </lineage>
</organism>